<accession>Q8E3B1</accession>
<dbReference type="EC" id="2.2.1.2" evidence="1"/>
<dbReference type="EMBL" id="AL766853">
    <property type="protein sequence ID" value="CAD47509.1"/>
    <property type="molecule type" value="Genomic_DNA"/>
</dbReference>
<dbReference type="SMR" id="Q8E3B1"/>
<dbReference type="KEGG" id="san:gbs1850"/>
<dbReference type="eggNOG" id="COG0176">
    <property type="taxonomic scope" value="Bacteria"/>
</dbReference>
<dbReference type="HOGENOM" id="CLU_079764_0_0_9"/>
<dbReference type="UniPathway" id="UPA00115">
    <property type="reaction ID" value="UER00414"/>
</dbReference>
<dbReference type="Proteomes" id="UP000000823">
    <property type="component" value="Chromosome"/>
</dbReference>
<dbReference type="GO" id="GO:0005737">
    <property type="term" value="C:cytoplasm"/>
    <property type="evidence" value="ECO:0007669"/>
    <property type="project" value="UniProtKB-SubCell"/>
</dbReference>
<dbReference type="GO" id="GO:0016832">
    <property type="term" value="F:aldehyde-lyase activity"/>
    <property type="evidence" value="ECO:0007669"/>
    <property type="project" value="InterPro"/>
</dbReference>
<dbReference type="GO" id="GO:0004801">
    <property type="term" value="F:transaldolase activity"/>
    <property type="evidence" value="ECO:0007669"/>
    <property type="project" value="UniProtKB-UniRule"/>
</dbReference>
<dbReference type="GO" id="GO:0005975">
    <property type="term" value="P:carbohydrate metabolic process"/>
    <property type="evidence" value="ECO:0007669"/>
    <property type="project" value="InterPro"/>
</dbReference>
<dbReference type="GO" id="GO:0006098">
    <property type="term" value="P:pentose-phosphate shunt"/>
    <property type="evidence" value="ECO:0007669"/>
    <property type="project" value="UniProtKB-UniRule"/>
</dbReference>
<dbReference type="CDD" id="cd00956">
    <property type="entry name" value="Transaldolase_FSA"/>
    <property type="match status" value="1"/>
</dbReference>
<dbReference type="FunFam" id="3.20.20.70:FF:000018">
    <property type="entry name" value="Probable transaldolase"/>
    <property type="match status" value="1"/>
</dbReference>
<dbReference type="Gene3D" id="3.20.20.70">
    <property type="entry name" value="Aldolase class I"/>
    <property type="match status" value="1"/>
</dbReference>
<dbReference type="HAMAP" id="MF_00494">
    <property type="entry name" value="Transaldolase_3b"/>
    <property type="match status" value="1"/>
</dbReference>
<dbReference type="InterPro" id="IPR013785">
    <property type="entry name" value="Aldolase_TIM"/>
</dbReference>
<dbReference type="InterPro" id="IPR001585">
    <property type="entry name" value="TAL/FSA"/>
</dbReference>
<dbReference type="InterPro" id="IPR022999">
    <property type="entry name" value="Transaldolase_3B"/>
</dbReference>
<dbReference type="InterPro" id="IPR004731">
    <property type="entry name" value="Transaldolase_3B/F6P_aldolase"/>
</dbReference>
<dbReference type="InterPro" id="IPR018225">
    <property type="entry name" value="Transaldolase_AS"/>
</dbReference>
<dbReference type="InterPro" id="IPR033919">
    <property type="entry name" value="TSA/FSA_arc/bac"/>
</dbReference>
<dbReference type="NCBIfam" id="TIGR00875">
    <property type="entry name" value="fsa_talC_mipB"/>
    <property type="match status" value="1"/>
</dbReference>
<dbReference type="PANTHER" id="PTHR10683">
    <property type="entry name" value="TRANSALDOLASE"/>
    <property type="match status" value="1"/>
</dbReference>
<dbReference type="PANTHER" id="PTHR10683:SF36">
    <property type="entry name" value="TRANSALDOLASE"/>
    <property type="match status" value="1"/>
</dbReference>
<dbReference type="Pfam" id="PF00923">
    <property type="entry name" value="TAL_FSA"/>
    <property type="match status" value="1"/>
</dbReference>
<dbReference type="SUPFAM" id="SSF51569">
    <property type="entry name" value="Aldolase"/>
    <property type="match status" value="1"/>
</dbReference>
<dbReference type="PROSITE" id="PS01054">
    <property type="entry name" value="TRANSALDOLASE_1"/>
    <property type="match status" value="1"/>
</dbReference>
<dbReference type="PROSITE" id="PS00958">
    <property type="entry name" value="TRANSALDOLASE_2"/>
    <property type="match status" value="1"/>
</dbReference>
<evidence type="ECO:0000255" key="1">
    <source>
        <dbReference type="HAMAP-Rule" id="MF_00494"/>
    </source>
</evidence>
<sequence length="215" mass="23549">MKYFLDTADVSEIRRLNRLGIVDGVTTNPTIISREGRDFKEVINEICQIVDGPVSAEVTGLTCDEMVTEAREIAKWSPNVVVKIPMTEEGLAAVSQLSKEGIKTNVTLIFTVAQGLSAMKAGATFISPFVGRLEDIGTDAYALIRDLRHIIDFYGFQSEIIAASIRGLAHVEGVAKCGAHIATIPDKTFASLFTHPLTDKGIETFLKDWDSFKKK</sequence>
<comment type="function">
    <text evidence="1">Transaldolase is important for the balance of metabolites in the pentose-phosphate pathway.</text>
</comment>
<comment type="catalytic activity">
    <reaction evidence="1">
        <text>D-sedoheptulose 7-phosphate + D-glyceraldehyde 3-phosphate = D-erythrose 4-phosphate + beta-D-fructose 6-phosphate</text>
        <dbReference type="Rhea" id="RHEA:17053"/>
        <dbReference type="ChEBI" id="CHEBI:16897"/>
        <dbReference type="ChEBI" id="CHEBI:57483"/>
        <dbReference type="ChEBI" id="CHEBI:57634"/>
        <dbReference type="ChEBI" id="CHEBI:59776"/>
        <dbReference type="EC" id="2.2.1.2"/>
    </reaction>
</comment>
<comment type="pathway">
    <text evidence="1">Carbohydrate degradation; pentose phosphate pathway; D-glyceraldehyde 3-phosphate and beta-D-fructose 6-phosphate from D-ribose 5-phosphate and D-xylulose 5-phosphate (non-oxidative stage): step 2/3.</text>
</comment>
<comment type="subcellular location">
    <subcellularLocation>
        <location evidence="1">Cytoplasm</location>
    </subcellularLocation>
</comment>
<comment type="similarity">
    <text evidence="1">Belongs to the transaldolase family. Type 3B subfamily.</text>
</comment>
<keyword id="KW-0963">Cytoplasm</keyword>
<keyword id="KW-0570">Pentose shunt</keyword>
<keyword id="KW-0704">Schiff base</keyword>
<keyword id="KW-0808">Transferase</keyword>
<organism>
    <name type="scientific">Streptococcus agalactiae serotype III (strain NEM316)</name>
    <dbReference type="NCBI Taxonomy" id="211110"/>
    <lineage>
        <taxon>Bacteria</taxon>
        <taxon>Bacillati</taxon>
        <taxon>Bacillota</taxon>
        <taxon>Bacilli</taxon>
        <taxon>Lactobacillales</taxon>
        <taxon>Streptococcaceae</taxon>
        <taxon>Streptococcus</taxon>
    </lineage>
</organism>
<name>TAL_STRA3</name>
<protein>
    <recommendedName>
        <fullName evidence="1">Probable transaldolase</fullName>
        <ecNumber evidence="1">2.2.1.2</ecNumber>
    </recommendedName>
</protein>
<feature type="chain" id="PRO_0000173681" description="Probable transaldolase">
    <location>
        <begin position="1"/>
        <end position="215"/>
    </location>
</feature>
<feature type="active site" description="Schiff-base intermediate with substrate" evidence="1">
    <location>
        <position position="83"/>
    </location>
</feature>
<proteinExistence type="inferred from homology"/>
<gene>
    <name evidence="1" type="primary">tal</name>
    <name type="ordered locus">gbs1850</name>
</gene>
<reference key="1">
    <citation type="journal article" date="2002" name="Mol. Microbiol.">
        <title>Genome sequence of Streptococcus agalactiae, a pathogen causing invasive neonatal disease.</title>
        <authorList>
            <person name="Glaser P."/>
            <person name="Rusniok C."/>
            <person name="Buchrieser C."/>
            <person name="Chevalier F."/>
            <person name="Frangeul L."/>
            <person name="Msadek T."/>
            <person name="Zouine M."/>
            <person name="Couve E."/>
            <person name="Lalioui L."/>
            <person name="Poyart C."/>
            <person name="Trieu-Cuot P."/>
            <person name="Kunst F."/>
        </authorList>
    </citation>
    <scope>NUCLEOTIDE SEQUENCE [LARGE SCALE GENOMIC DNA]</scope>
    <source>
        <strain>NEM316</strain>
    </source>
</reference>